<sequence>MTPQDFYRTLEEDGFSLSSKQKEQFDTYFKLLVEWNTKINLTAITEENEVYLKHFYDSIAPILQGFLANEPIKLLDIGAGAGFPSLPMKILFPNLEVTIIDSLNKRISFLTLLAQELGLENVHFFHGRAEDFGQDKAFRGQFDVVTARAVARMQVLSELTIPFLKIGGKLIALKAQAADQELEEAKNALCLLFGKVIKNHSYQLPNGDSRFITIVEKKKETPNKYPRKAGLPNKKPL</sequence>
<proteinExistence type="inferred from homology"/>
<name>RSMG_STRP3</name>
<accession>P0DF44</accession>
<accession>Q8K8K3</accession>
<protein>
    <recommendedName>
        <fullName evidence="1">Ribosomal RNA small subunit methyltransferase G</fullName>
        <ecNumber evidence="1">2.1.1.-</ecNumber>
    </recommendedName>
    <alternativeName>
        <fullName evidence="1">16S rRNA 7-methylguanosine methyltransferase</fullName>
        <shortName evidence="1">16S rRNA m7G methyltransferase</shortName>
    </alternativeName>
</protein>
<evidence type="ECO:0000255" key="1">
    <source>
        <dbReference type="HAMAP-Rule" id="MF_00074"/>
    </source>
</evidence>
<feature type="chain" id="PRO_0000184344" description="Ribosomal RNA small subunit methyltransferase G">
    <location>
        <begin position="1"/>
        <end position="237"/>
    </location>
</feature>
<feature type="binding site" evidence="1">
    <location>
        <position position="78"/>
    </location>
    <ligand>
        <name>S-adenosyl-L-methionine</name>
        <dbReference type="ChEBI" id="CHEBI:59789"/>
    </ligand>
</feature>
<feature type="binding site" evidence="1">
    <location>
        <position position="83"/>
    </location>
    <ligand>
        <name>S-adenosyl-L-methionine</name>
        <dbReference type="ChEBI" id="CHEBI:59789"/>
    </ligand>
</feature>
<feature type="binding site" evidence="1">
    <location>
        <begin position="129"/>
        <end position="130"/>
    </location>
    <ligand>
        <name>S-adenosyl-L-methionine</name>
        <dbReference type="ChEBI" id="CHEBI:59789"/>
    </ligand>
</feature>
<feature type="binding site" evidence="1">
    <location>
        <position position="148"/>
    </location>
    <ligand>
        <name>S-adenosyl-L-methionine</name>
        <dbReference type="ChEBI" id="CHEBI:59789"/>
    </ligand>
</feature>
<comment type="function">
    <text evidence="1">Specifically methylates the N7 position of a guanine in 16S rRNA.</text>
</comment>
<comment type="subcellular location">
    <subcellularLocation>
        <location evidence="1">Cytoplasm</location>
    </subcellularLocation>
</comment>
<comment type="similarity">
    <text evidence="1">Belongs to the methyltransferase superfamily. RNA methyltransferase RsmG family.</text>
</comment>
<keyword id="KW-0963">Cytoplasm</keyword>
<keyword id="KW-0489">Methyltransferase</keyword>
<keyword id="KW-0698">rRNA processing</keyword>
<keyword id="KW-0949">S-adenosyl-L-methionine</keyword>
<keyword id="KW-0808">Transferase</keyword>
<reference key="1">
    <citation type="journal article" date="2002" name="Proc. Natl. Acad. Sci. U.S.A.">
        <title>Genome sequence of a serotype M3 strain of group A Streptococcus: phage-encoded toxins, the high-virulence phenotype, and clone emergence.</title>
        <authorList>
            <person name="Beres S.B."/>
            <person name="Sylva G.L."/>
            <person name="Barbian K.D."/>
            <person name="Lei B."/>
            <person name="Hoff J.S."/>
            <person name="Mammarella N.D."/>
            <person name="Liu M.-Y."/>
            <person name="Smoot J.C."/>
            <person name="Porcella S.F."/>
            <person name="Parkins L.D."/>
            <person name="Campbell D.S."/>
            <person name="Smith T.M."/>
            <person name="McCormick J.K."/>
            <person name="Leung D.Y.M."/>
            <person name="Schlievert P.M."/>
            <person name="Musser J.M."/>
        </authorList>
    </citation>
    <scope>NUCLEOTIDE SEQUENCE [LARGE SCALE GENOMIC DNA]</scope>
    <source>
        <strain>ATCC BAA-595 / MGAS315</strain>
    </source>
</reference>
<organism>
    <name type="scientific">Streptococcus pyogenes serotype M3 (strain ATCC BAA-595 / MGAS315)</name>
    <dbReference type="NCBI Taxonomy" id="198466"/>
    <lineage>
        <taxon>Bacteria</taxon>
        <taxon>Bacillati</taxon>
        <taxon>Bacillota</taxon>
        <taxon>Bacilli</taxon>
        <taxon>Lactobacillales</taxon>
        <taxon>Streptococcaceae</taxon>
        <taxon>Streptococcus</taxon>
    </lineage>
</organism>
<dbReference type="EC" id="2.1.1.-" evidence="1"/>
<dbReference type="EMBL" id="AE014074">
    <property type="protein sequence ID" value="AAM78847.1"/>
    <property type="molecule type" value="Genomic_DNA"/>
</dbReference>
<dbReference type="RefSeq" id="WP_011054198.1">
    <property type="nucleotide sequence ID" value="NC_004070.1"/>
</dbReference>
<dbReference type="SMR" id="P0DF44"/>
<dbReference type="KEGG" id="spg:SpyM3_0240"/>
<dbReference type="HOGENOM" id="CLU_065341_0_2_9"/>
<dbReference type="Proteomes" id="UP000000564">
    <property type="component" value="Chromosome"/>
</dbReference>
<dbReference type="GO" id="GO:0005829">
    <property type="term" value="C:cytosol"/>
    <property type="evidence" value="ECO:0007669"/>
    <property type="project" value="TreeGrafter"/>
</dbReference>
<dbReference type="GO" id="GO:0070043">
    <property type="term" value="F:rRNA (guanine-N7-)-methyltransferase activity"/>
    <property type="evidence" value="ECO:0007669"/>
    <property type="project" value="UniProtKB-UniRule"/>
</dbReference>
<dbReference type="CDD" id="cd02440">
    <property type="entry name" value="AdoMet_MTases"/>
    <property type="match status" value="1"/>
</dbReference>
<dbReference type="FunFam" id="3.40.50.150:FF:000041">
    <property type="entry name" value="Ribosomal RNA small subunit methyltransferase G"/>
    <property type="match status" value="1"/>
</dbReference>
<dbReference type="Gene3D" id="3.40.50.150">
    <property type="entry name" value="Vaccinia Virus protein VP39"/>
    <property type="match status" value="1"/>
</dbReference>
<dbReference type="HAMAP" id="MF_00074">
    <property type="entry name" value="16SrRNA_methyltr_G"/>
    <property type="match status" value="1"/>
</dbReference>
<dbReference type="InterPro" id="IPR003682">
    <property type="entry name" value="rRNA_ssu_MeTfrase_G"/>
</dbReference>
<dbReference type="InterPro" id="IPR029063">
    <property type="entry name" value="SAM-dependent_MTases_sf"/>
</dbReference>
<dbReference type="NCBIfam" id="TIGR00138">
    <property type="entry name" value="rsmG_gidB"/>
    <property type="match status" value="1"/>
</dbReference>
<dbReference type="PANTHER" id="PTHR31760">
    <property type="entry name" value="S-ADENOSYL-L-METHIONINE-DEPENDENT METHYLTRANSFERASES SUPERFAMILY PROTEIN"/>
    <property type="match status" value="1"/>
</dbReference>
<dbReference type="PANTHER" id="PTHR31760:SF0">
    <property type="entry name" value="S-ADENOSYL-L-METHIONINE-DEPENDENT METHYLTRANSFERASES SUPERFAMILY PROTEIN"/>
    <property type="match status" value="1"/>
</dbReference>
<dbReference type="Pfam" id="PF02527">
    <property type="entry name" value="GidB"/>
    <property type="match status" value="1"/>
</dbReference>
<dbReference type="PIRSF" id="PIRSF003078">
    <property type="entry name" value="GidB"/>
    <property type="match status" value="1"/>
</dbReference>
<dbReference type="SUPFAM" id="SSF53335">
    <property type="entry name" value="S-adenosyl-L-methionine-dependent methyltransferases"/>
    <property type="match status" value="1"/>
</dbReference>
<gene>
    <name evidence="1" type="primary">rsmG</name>
    <name type="ordered locus">SpyM3_0240</name>
</gene>